<dbReference type="EC" id="5.1.3.24" evidence="1"/>
<dbReference type="EMBL" id="AE009952">
    <property type="protein sequence ID" value="AAM86005.1"/>
    <property type="molecule type" value="Genomic_DNA"/>
</dbReference>
<dbReference type="EMBL" id="AE017042">
    <property type="protein sequence ID" value="AAS61770.1"/>
    <property type="molecule type" value="Genomic_DNA"/>
</dbReference>
<dbReference type="EMBL" id="AL590842">
    <property type="protein sequence ID" value="CAL20498.1"/>
    <property type="molecule type" value="Genomic_DNA"/>
</dbReference>
<dbReference type="PIR" id="AG0226">
    <property type="entry name" value="AG0226"/>
</dbReference>
<dbReference type="RefSeq" id="WP_002211169.1">
    <property type="nucleotide sequence ID" value="NZ_WUCM01000005.1"/>
</dbReference>
<dbReference type="RefSeq" id="YP_002346852.1">
    <property type="nucleotide sequence ID" value="NC_003143.1"/>
</dbReference>
<dbReference type="SMR" id="Q7CI10"/>
<dbReference type="STRING" id="214092.YPO1858"/>
<dbReference type="PaxDb" id="214092-YPO1858"/>
<dbReference type="DNASU" id="1147395"/>
<dbReference type="EnsemblBacteria" id="AAS61770">
    <property type="protein sequence ID" value="AAS61770"/>
    <property type="gene ID" value="YP_1535"/>
</dbReference>
<dbReference type="KEGG" id="ype:YPO1858"/>
<dbReference type="KEGG" id="ypk:y2448"/>
<dbReference type="KEGG" id="ypm:YP_1535"/>
<dbReference type="PATRIC" id="fig|214092.21.peg.2223"/>
<dbReference type="eggNOG" id="COG3055">
    <property type="taxonomic scope" value="Bacteria"/>
</dbReference>
<dbReference type="HOGENOM" id="CLU_061535_0_0_6"/>
<dbReference type="OMA" id="FNGFFQD"/>
<dbReference type="OrthoDB" id="198899at2"/>
<dbReference type="Proteomes" id="UP000000815">
    <property type="component" value="Chromosome"/>
</dbReference>
<dbReference type="Proteomes" id="UP000001019">
    <property type="component" value="Chromosome"/>
</dbReference>
<dbReference type="Proteomes" id="UP000002490">
    <property type="component" value="Chromosome"/>
</dbReference>
<dbReference type="GO" id="GO:0042597">
    <property type="term" value="C:periplasmic space"/>
    <property type="evidence" value="ECO:0007669"/>
    <property type="project" value="UniProtKB-SubCell"/>
</dbReference>
<dbReference type="GO" id="GO:0016857">
    <property type="term" value="F:racemase and epimerase activity, acting on carbohydrates and derivatives"/>
    <property type="evidence" value="ECO:0007669"/>
    <property type="project" value="UniProtKB-UniRule"/>
</dbReference>
<dbReference type="Gene3D" id="2.120.10.80">
    <property type="entry name" value="Kelch-type beta propeller"/>
    <property type="match status" value="1"/>
</dbReference>
<dbReference type="HAMAP" id="MF_01195">
    <property type="entry name" value="NanM"/>
    <property type="match status" value="1"/>
</dbReference>
<dbReference type="InterPro" id="IPR015915">
    <property type="entry name" value="Kelch-typ_b-propeller"/>
</dbReference>
<dbReference type="InterPro" id="IPR056734">
    <property type="entry name" value="NANM"/>
</dbReference>
<dbReference type="InterPro" id="IPR019936">
    <property type="entry name" value="NanM_proteobact"/>
</dbReference>
<dbReference type="NCBIfam" id="TIGR03547">
    <property type="entry name" value="muta_rot_YjhT"/>
    <property type="match status" value="1"/>
</dbReference>
<dbReference type="NCBIfam" id="NF010730">
    <property type="entry name" value="PRK14131.1"/>
    <property type="match status" value="1"/>
</dbReference>
<dbReference type="PANTHER" id="PTHR24412">
    <property type="entry name" value="KELCH PROTEIN"/>
    <property type="match status" value="1"/>
</dbReference>
<dbReference type="PANTHER" id="PTHR24412:SF441">
    <property type="entry name" value="KELCH-LIKE PROTEIN 28"/>
    <property type="match status" value="1"/>
</dbReference>
<dbReference type="Pfam" id="PF24996">
    <property type="entry name" value="NANM"/>
    <property type="match status" value="1"/>
</dbReference>
<dbReference type="SUPFAM" id="SSF117281">
    <property type="entry name" value="Kelch motif"/>
    <property type="match status" value="1"/>
</dbReference>
<evidence type="ECO:0000255" key="1">
    <source>
        <dbReference type="HAMAP-Rule" id="MF_01195"/>
    </source>
</evidence>
<accession>Q7CI10</accession>
<accession>Q74V03</accession>
<proteinExistence type="inferred from homology"/>
<gene>
    <name evidence="1" type="primary">nanM</name>
    <name type="ordered locus">YPO1858</name>
    <name type="ordered locus">y2448</name>
    <name type="ordered locus">YP_1535</name>
</gene>
<reference key="1">
    <citation type="journal article" date="2002" name="J. Bacteriol.">
        <title>Genome sequence of Yersinia pestis KIM.</title>
        <authorList>
            <person name="Deng W."/>
            <person name="Burland V."/>
            <person name="Plunkett G. III"/>
            <person name="Boutin A."/>
            <person name="Mayhew G.F."/>
            <person name="Liss P."/>
            <person name="Perna N.T."/>
            <person name="Rose D.J."/>
            <person name="Mau B."/>
            <person name="Zhou S."/>
            <person name="Schwartz D.C."/>
            <person name="Fetherston J.D."/>
            <person name="Lindler L.E."/>
            <person name="Brubaker R.R."/>
            <person name="Plano G.V."/>
            <person name="Straley S.C."/>
            <person name="McDonough K.A."/>
            <person name="Nilles M.L."/>
            <person name="Matson J.S."/>
            <person name="Blattner F.R."/>
            <person name="Perry R.D."/>
        </authorList>
    </citation>
    <scope>NUCLEOTIDE SEQUENCE [LARGE SCALE GENOMIC DNA]</scope>
    <source>
        <strain>KIM10+ / Biovar Mediaevalis</strain>
    </source>
</reference>
<reference key="2">
    <citation type="journal article" date="2001" name="Nature">
        <title>Genome sequence of Yersinia pestis, the causative agent of plague.</title>
        <authorList>
            <person name="Parkhill J."/>
            <person name="Wren B.W."/>
            <person name="Thomson N.R."/>
            <person name="Titball R.W."/>
            <person name="Holden M.T.G."/>
            <person name="Prentice M.B."/>
            <person name="Sebaihia M."/>
            <person name="James K.D."/>
            <person name="Churcher C.M."/>
            <person name="Mungall K.L."/>
            <person name="Baker S."/>
            <person name="Basham D."/>
            <person name="Bentley S.D."/>
            <person name="Brooks K."/>
            <person name="Cerdeno-Tarraga A.-M."/>
            <person name="Chillingworth T."/>
            <person name="Cronin A."/>
            <person name="Davies R.M."/>
            <person name="Davis P."/>
            <person name="Dougan G."/>
            <person name="Feltwell T."/>
            <person name="Hamlin N."/>
            <person name="Holroyd S."/>
            <person name="Jagels K."/>
            <person name="Karlyshev A.V."/>
            <person name="Leather S."/>
            <person name="Moule S."/>
            <person name="Oyston P.C.F."/>
            <person name="Quail M.A."/>
            <person name="Rutherford K.M."/>
            <person name="Simmonds M."/>
            <person name="Skelton J."/>
            <person name="Stevens K."/>
            <person name="Whitehead S."/>
            <person name="Barrell B.G."/>
        </authorList>
    </citation>
    <scope>NUCLEOTIDE SEQUENCE [LARGE SCALE GENOMIC DNA]</scope>
    <source>
        <strain>CO-92 / Biovar Orientalis</strain>
    </source>
</reference>
<reference key="3">
    <citation type="journal article" date="2004" name="DNA Res.">
        <title>Complete genome sequence of Yersinia pestis strain 91001, an isolate avirulent to humans.</title>
        <authorList>
            <person name="Song Y."/>
            <person name="Tong Z."/>
            <person name="Wang J."/>
            <person name="Wang L."/>
            <person name="Guo Z."/>
            <person name="Han Y."/>
            <person name="Zhang J."/>
            <person name="Pei D."/>
            <person name="Zhou D."/>
            <person name="Qin H."/>
            <person name="Pang X."/>
            <person name="Han Y."/>
            <person name="Zhai J."/>
            <person name="Li M."/>
            <person name="Cui B."/>
            <person name="Qi Z."/>
            <person name="Jin L."/>
            <person name="Dai R."/>
            <person name="Chen F."/>
            <person name="Li S."/>
            <person name="Ye C."/>
            <person name="Du Z."/>
            <person name="Lin W."/>
            <person name="Wang J."/>
            <person name="Yu J."/>
            <person name="Yang H."/>
            <person name="Wang J."/>
            <person name="Huang P."/>
            <person name="Yang R."/>
        </authorList>
    </citation>
    <scope>NUCLEOTIDE SEQUENCE [LARGE SCALE GENOMIC DNA]</scope>
    <source>
        <strain>91001 / Biovar Mediaevalis</strain>
    </source>
</reference>
<organism>
    <name type="scientific">Yersinia pestis</name>
    <dbReference type="NCBI Taxonomy" id="632"/>
    <lineage>
        <taxon>Bacteria</taxon>
        <taxon>Pseudomonadati</taxon>
        <taxon>Pseudomonadota</taxon>
        <taxon>Gammaproteobacteria</taxon>
        <taxon>Enterobacterales</taxon>
        <taxon>Yersiniaceae</taxon>
        <taxon>Yersinia</taxon>
    </lineage>
</organism>
<comment type="function">
    <text evidence="1">Converts alpha-N-acetylneuranimic acid (Neu5Ac) to the beta-anomer, accelerating the equilibrium between the alpha- and beta-anomers. Probably facilitates sialidase-negative bacteria to compete successfully for limited amounts of extracellular Neu5Ac, which is likely taken up in the beta-anomer. In addition, the rapid removal of sialic acid from solution might be advantageous to the bacterium to damp down host responses.</text>
</comment>
<comment type="catalytic activity">
    <reaction evidence="1">
        <text>N-acetyl-alpha-neuraminate = N-acetyl-beta-neuraminate</text>
        <dbReference type="Rhea" id="RHEA:25233"/>
        <dbReference type="ChEBI" id="CHEBI:58705"/>
        <dbReference type="ChEBI" id="CHEBI:58770"/>
        <dbReference type="EC" id="5.1.3.24"/>
    </reaction>
</comment>
<comment type="subunit">
    <text evidence="1">Homodimer.</text>
</comment>
<comment type="subcellular location">
    <subcellularLocation>
        <location evidence="1">Periplasm</location>
    </subcellularLocation>
</comment>
<comment type="similarity">
    <text evidence="1">Belongs to the NanM family.</text>
</comment>
<keyword id="KW-0119">Carbohydrate metabolism</keyword>
<keyword id="KW-0413">Isomerase</keyword>
<keyword id="KW-0880">Kelch repeat</keyword>
<keyword id="KW-0574">Periplasm</keyword>
<keyword id="KW-1185">Reference proteome</keyword>
<keyword id="KW-0677">Repeat</keyword>
<keyword id="KW-0732">Signal</keyword>
<feature type="signal peptide" evidence="1">
    <location>
        <begin position="1"/>
        <end position="35"/>
    </location>
</feature>
<feature type="chain" id="PRO_0000333075" description="N-acetylneuraminate epimerase">
    <location>
        <begin position="36"/>
        <end position="392"/>
    </location>
</feature>
<feature type="repeat" description="Kelch 1">
    <location>
        <begin position="56"/>
        <end position="100"/>
    </location>
</feature>
<feature type="repeat" description="Kelch 2">
    <location>
        <begin position="102"/>
        <end position="155"/>
    </location>
</feature>
<feature type="repeat" description="Kelch 3">
    <location>
        <begin position="157"/>
        <end position="192"/>
    </location>
</feature>
<feature type="repeat" description="Kelch 4">
    <location>
        <begin position="193"/>
        <end position="238"/>
    </location>
</feature>
<feature type="repeat" description="Kelch 5">
    <location>
        <begin position="241"/>
        <end position="290"/>
    </location>
</feature>
<feature type="repeat" description="Kelch 6">
    <location>
        <begin position="312"/>
        <end position="361"/>
    </location>
</feature>
<feature type="repeat" description="Kelch 7">
    <location>
        <begin position="363"/>
        <end position="392"/>
    </location>
</feature>
<feature type="active site" description="Proton acceptor" evidence="1">
    <location>
        <position position="247"/>
    </location>
</feature>
<sequence>MTQLYPQYKKQLTTKIVLFSALSLLMMASLPNTYAEQYPDVPVPFKNGTGGKVENSLYVGLGSAGVSWFRLDTDKTGAGWQKVANFPGQPREQAVTVVLAGKLYVFGGVGKTNANDTQVRALDDAYRFDPQTNQWQQLATRAPRGLVGTVATTLDGSQAVLLGGVNKAIFDGYFTDLASAGSDEVRKSAVINAYFNQAPADYFYNRDVLIYDPQKNQWKSGGLLPFLGTAGSAISRMDNRLILINGEIKPGLRTAAVWQGLMQGNVLEWQPQPDLIGAETGSAQEGLAGAFSGISHKTVLVAGGANFPGAWKQFNRGHLYAHQGLEKQWHQQVYALVDNQWRIAGKLPQPLGYGVSIQGPDKVILIGGETTGGTATSAVTQLSWQGGKLHIE</sequence>
<protein>
    <recommendedName>
        <fullName evidence="1">N-acetylneuraminate epimerase</fullName>
        <ecNumber evidence="1">5.1.3.24</ecNumber>
    </recommendedName>
    <alternativeName>
        <fullName evidence="1">N-acetylneuraminate mutarotase</fullName>
        <shortName evidence="1">Neu5Ac mutarotase</shortName>
    </alternativeName>
    <alternativeName>
        <fullName evidence="1">Sialic acid epimerase</fullName>
    </alternativeName>
</protein>
<name>NANM_YERPE</name>